<proteinExistence type="inferred from homology"/>
<protein>
    <recommendedName>
        <fullName evidence="1">Protein TIC 214</fullName>
    </recommendedName>
    <alternativeName>
        <fullName evidence="1">Translocon at the inner envelope membrane of chloroplasts 214</fullName>
        <shortName evidence="1">AtTIC214</shortName>
    </alternativeName>
</protein>
<dbReference type="EMBL" id="DQ673255">
    <property type="protein sequence ID" value="ABG74675.1"/>
    <property type="molecule type" value="Genomic_DNA"/>
</dbReference>
<dbReference type="EMBL" id="DQ673255">
    <property type="protein sequence ID" value="ABG74687.1"/>
    <property type="molecule type" value="Genomic_DNA"/>
</dbReference>
<dbReference type="GO" id="GO:0009706">
    <property type="term" value="C:chloroplast inner membrane"/>
    <property type="evidence" value="ECO:0007669"/>
    <property type="project" value="UniProtKB-SubCell"/>
</dbReference>
<dbReference type="GO" id="GO:0015031">
    <property type="term" value="P:protein transport"/>
    <property type="evidence" value="ECO:0007669"/>
    <property type="project" value="UniProtKB-KW"/>
</dbReference>
<dbReference type="InterPro" id="IPR008896">
    <property type="entry name" value="TIC214"/>
</dbReference>
<dbReference type="PANTHER" id="PTHR33163:SF40">
    <property type="entry name" value="PROTEIN TIC 214"/>
    <property type="match status" value="1"/>
</dbReference>
<dbReference type="PANTHER" id="PTHR33163">
    <property type="entry name" value="PROTEIN TIC 214-RELATED"/>
    <property type="match status" value="1"/>
</dbReference>
<dbReference type="Pfam" id="PF05758">
    <property type="entry name" value="Ycf1"/>
    <property type="match status" value="3"/>
</dbReference>
<feature type="chain" id="PRO_0000262612" description="Protein TIC 214">
    <location>
        <begin position="1"/>
        <end position="1933"/>
    </location>
</feature>
<feature type="transmembrane region" description="Helical" evidence="2">
    <location>
        <begin position="18"/>
        <end position="38"/>
    </location>
</feature>
<feature type="transmembrane region" description="Helical" evidence="2">
    <location>
        <begin position="60"/>
        <end position="80"/>
    </location>
</feature>
<feature type="transmembrane region" description="Helical" evidence="2">
    <location>
        <begin position="87"/>
        <end position="107"/>
    </location>
</feature>
<feature type="transmembrane region" description="Helical" evidence="2">
    <location>
        <begin position="128"/>
        <end position="148"/>
    </location>
</feature>
<feature type="transmembrane region" description="Helical" evidence="2">
    <location>
        <begin position="176"/>
        <end position="196"/>
    </location>
</feature>
<feature type="transmembrane region" description="Helical" evidence="2">
    <location>
        <begin position="230"/>
        <end position="250"/>
    </location>
</feature>
<feature type="transmembrane region" description="Helical" evidence="2">
    <location>
        <begin position="1135"/>
        <end position="1155"/>
    </location>
</feature>
<feature type="region of interest" description="Disordered" evidence="3">
    <location>
        <begin position="266"/>
        <end position="291"/>
    </location>
</feature>
<feature type="region of interest" description="Disordered" evidence="3">
    <location>
        <begin position="473"/>
        <end position="514"/>
    </location>
</feature>
<feature type="region of interest" description="Disordered" evidence="3">
    <location>
        <begin position="808"/>
        <end position="832"/>
    </location>
</feature>
<feature type="region of interest" description="Disordered" evidence="3">
    <location>
        <begin position="1066"/>
        <end position="1121"/>
    </location>
</feature>
<feature type="region of interest" description="Disordered" evidence="3">
    <location>
        <begin position="1562"/>
        <end position="1642"/>
    </location>
</feature>
<feature type="compositionally biased region" description="Acidic residues" evidence="3">
    <location>
        <begin position="278"/>
        <end position="289"/>
    </location>
</feature>
<feature type="compositionally biased region" description="Polar residues" evidence="3">
    <location>
        <begin position="476"/>
        <end position="487"/>
    </location>
</feature>
<feature type="compositionally biased region" description="Basic and acidic residues" evidence="3">
    <location>
        <begin position="488"/>
        <end position="514"/>
    </location>
</feature>
<feature type="compositionally biased region" description="Basic and acidic residues" evidence="3">
    <location>
        <begin position="819"/>
        <end position="832"/>
    </location>
</feature>
<feature type="compositionally biased region" description="Polar residues" evidence="3">
    <location>
        <begin position="1066"/>
        <end position="1078"/>
    </location>
</feature>
<feature type="compositionally biased region" description="Basic residues" evidence="3">
    <location>
        <begin position="1105"/>
        <end position="1115"/>
    </location>
</feature>
<feature type="compositionally biased region" description="Basic and acidic residues" evidence="3">
    <location>
        <begin position="1564"/>
        <end position="1642"/>
    </location>
</feature>
<organism>
    <name type="scientific">Jasminum nudiflorum</name>
    <name type="common">Winter jasmine</name>
    <dbReference type="NCBI Taxonomy" id="126431"/>
    <lineage>
        <taxon>Eukaryota</taxon>
        <taxon>Viridiplantae</taxon>
        <taxon>Streptophyta</taxon>
        <taxon>Embryophyta</taxon>
        <taxon>Tracheophyta</taxon>
        <taxon>Spermatophyta</taxon>
        <taxon>Magnoliopsida</taxon>
        <taxon>eudicotyledons</taxon>
        <taxon>Gunneridae</taxon>
        <taxon>Pentapetalae</taxon>
        <taxon>asterids</taxon>
        <taxon>lamiids</taxon>
        <taxon>Lamiales</taxon>
        <taxon>Oleaceae</taxon>
        <taxon>Jasmineae</taxon>
        <taxon>Jasminum</taxon>
    </lineage>
</organism>
<name>TI214_JASNU</name>
<accession>Q06R72</accession>
<reference key="1">
    <citation type="journal article" date="2007" name="Mol. Biol. Evol.">
        <title>Gene relocations within chloroplast genomes of Jasminum and Menodora (Oleaceae) are due to multiple, overlapping inversions.</title>
        <authorList>
            <person name="Lee H.-L."/>
            <person name="Jansen R.K."/>
            <person name="Chumley T.W."/>
            <person name="Kim K.-J."/>
        </authorList>
    </citation>
    <scope>NUCLEOTIDE SEQUENCE [LARGE SCALE GENOMIC DNA]</scope>
</reference>
<sequence>MLFHFFLRCNLASLCIKIVNSVVVVGLYYGLLTTFSIGPSYFFLLRAQVMEEGTEKKVSATTGFITGQLIMFISIYYAPLHRALARPHTITVLALPYLFVYFIFYTDKRFMHPRKNAMLNTTTSMRNFSIQCVFLNNLIFQLFNHFILPSSMVARLVNIYMFRCNNKMLFVTSSFVGWLIGHILFWKWLGLVLVWIRQNRSIRIRPNKYIPFYKLIRLDKYLVSKWGDRIFYILVILIWFYLGGKIPAPLLSMKFDESTIQLEKGAKGKKKKRGKGEEEGDVEKEDEVGVGEKKGEIDESEEIRVNGELFKSLVAHFFVFDPNHFATLLFDPNRWNRPFRYIKNDRFDNAFRTEMSQYFFDTCPSAGKERISFTYPPSLSTFWEMIERRISLPTLDKFSSNELSNHWVYTNEQKSNNLKNEFVNRIEALDKESVSLNRLETTSRLCNDNTTKEYLPEPYDPFLNGPYRRTIKKTKSLSPEKTSGDNLETSRDNLETSRDNLETSRDNLETSRDNLETSRDNLIDKIGINRIHSILLPDIPDTDYQKLEDQFDKKQLSIEIVDLFTFAFISEFGKKKGPKSESNLISRDLLISRDLSVFSDEKEVRIEDGKGVIIDDEKGKKYFEYLENRIGTNTDDENIDKDSIAKIRKKVSRWIYNATSELDQAYGEDERKDPMDNEIRSRDAKRVIVVPKEKLERDDDDDEEEPTDIDKIIFPEHGDFRRDVIWGSIRAQRRKIVIWRTLQRYTHSPLFLDSLKDFRHYFVDFLLDILNIFEPIWRIIRNLRIFLIKLIRKRFALKILEHREEQQTHREEKKKRKKDEKNEKNAKNAEDPEREPRLWVSEFWTIIEYAQEVRGCVLLTHSFIRRNIVIPLLIIVKNIGRMLLFQRPELYEDFEDWQRESHVKCTYEGIPLSETDFPEDWLVEGIQIKILYPFRLKPWHVPGSDSDQNRKKAEEKGDFCFLTVYGTETNLPFGYSRLPPPTFESFFKPIFQELKKQMRNSKKNIWKLGKMLFQKVKGTKFLRKVAKKWVRKSIILGKKIIEGLKKIKELVKKERDPITSNQMIPESFTQISSPSSTNSEKKRNKMQDLTNRANKARNEIERIRKEKKKKKRSLKKTSSNAKRLQRIKDRLIRKLPVYLKLFIQRIYTGIFFSIINIRRMSQKFRNKFIPDQERKDILPFIYTINKIKESLYTNNSEENSHIFYDLSYLSQAYVFYKLSEIQLSNLDKFKSVLQYQGIPFFLRSEIKDSFKTQGIVHSKRLPSSEMNQWKNWLRGHSQYDLSKTRWSILIPQRWRNRVHRMVKRKNFNKRNLYEKYEKDQFIDSKKENICEVSNRNQKDDNFQKCCKYDLLSYKSIHSENKKDSRSLFDKLSFNSNTAFFDLLVDRARGMPIDINNLTGTGDIPYTEKTPDRKYLDWKMIHFDFIRNQLDIENWITIDVNRKDNRNQKTPIYTNNYLTNDHDTNFEIIYKIDKKTKKPILDLDFLRIPEKNPSNSSKGFLDWMGLNETQTHPVVLNKFNRLKMEANLFPEIVLFYNAYKTQPWLLSSKLLLLNLNNNENEINADNEKNEKKEAKKEAKKEAKKEAKKEEKQNIKKELTTKGDLENKGDLESVPSKEKNPSKDSKEKKDIQKDSAESTTKKVTSKELQKELDAFLQRYSGYLVKWNRRVDPDIVPKSEINWEVYSYLYRLFDDENPRNRKEIDPTHLVLSSAKRGELAFEILATRPIQSWKKLLLKRKELVFFEPIRLFGKNNGQFIMYQTIGISLVHNNKHEIQPRFRKKKKRYGSKTNFDESIPPHERITRNDERIPTNDEDEKRNKRLRINYERNADKNHLDLLVPENIFSFRRRRKLRILNCLNSKNRNDVDRNPVFCNEKNSSQDLDREKNLLMKLKFFLWPNYRLEDLACMNRYWFDTNNGSRFSMLRIRLYPRLKIR</sequence>
<evidence type="ECO:0000250" key="1">
    <source>
        <dbReference type="UniProtKB" id="P56785"/>
    </source>
</evidence>
<evidence type="ECO:0000255" key="2"/>
<evidence type="ECO:0000256" key="3">
    <source>
        <dbReference type="SAM" id="MobiDB-lite"/>
    </source>
</evidence>
<evidence type="ECO:0000305" key="4"/>
<keyword id="KW-0150">Chloroplast</keyword>
<keyword id="KW-0472">Membrane</keyword>
<keyword id="KW-0934">Plastid</keyword>
<keyword id="KW-1001">Plastid inner membrane</keyword>
<keyword id="KW-0653">Protein transport</keyword>
<keyword id="KW-0812">Transmembrane</keyword>
<keyword id="KW-1133">Transmembrane helix</keyword>
<keyword id="KW-0813">Transport</keyword>
<geneLocation type="chloroplast"/>
<comment type="function">
    <text evidence="1">Involved in protein precursor import into chloroplasts. May be part of an intermediate translocation complex acting as a protein-conducting channel at the inner envelope.</text>
</comment>
<comment type="subunit">
    <text evidence="1">Part of the Tic complex.</text>
</comment>
<comment type="subcellular location">
    <subcellularLocation>
        <location evidence="1">Plastid</location>
        <location evidence="1">Chloroplast inner membrane</location>
        <topology evidence="2">Multi-pass membrane protein</topology>
    </subcellularLocation>
</comment>
<comment type="similarity">
    <text evidence="4">Belongs to the TIC214 family.</text>
</comment>
<gene>
    <name evidence="1" type="primary">TIC214</name>
    <name type="synonym">ycf1-A</name>
</gene>
<gene>
    <name evidence="1" type="primary">TIC214</name>
    <name type="synonym">ycf1-B</name>
</gene>